<evidence type="ECO:0000255" key="1">
    <source>
        <dbReference type="HAMAP-Rule" id="MF_00741"/>
    </source>
</evidence>
<organism>
    <name type="scientific">Prochlorococcus marinus (strain NATL1A)</name>
    <dbReference type="NCBI Taxonomy" id="167555"/>
    <lineage>
        <taxon>Bacteria</taxon>
        <taxon>Bacillati</taxon>
        <taxon>Cyanobacteriota</taxon>
        <taxon>Cyanophyceae</taxon>
        <taxon>Synechococcales</taxon>
        <taxon>Prochlorococcaceae</taxon>
        <taxon>Prochlorococcus</taxon>
    </lineage>
</organism>
<dbReference type="EC" id="6.3.3.1" evidence="1"/>
<dbReference type="EMBL" id="CP000553">
    <property type="protein sequence ID" value="ABM76595.1"/>
    <property type="molecule type" value="Genomic_DNA"/>
</dbReference>
<dbReference type="RefSeq" id="WP_011824545.1">
    <property type="nucleotide sequence ID" value="NC_008819.1"/>
</dbReference>
<dbReference type="SMR" id="A2C535"/>
<dbReference type="KEGG" id="pme:NATL1_20391"/>
<dbReference type="eggNOG" id="COG0150">
    <property type="taxonomic scope" value="Bacteria"/>
</dbReference>
<dbReference type="HOGENOM" id="CLU_047116_0_0_3"/>
<dbReference type="UniPathway" id="UPA00074">
    <property type="reaction ID" value="UER00129"/>
</dbReference>
<dbReference type="Proteomes" id="UP000002592">
    <property type="component" value="Chromosome"/>
</dbReference>
<dbReference type="GO" id="GO:0005829">
    <property type="term" value="C:cytosol"/>
    <property type="evidence" value="ECO:0007669"/>
    <property type="project" value="TreeGrafter"/>
</dbReference>
<dbReference type="GO" id="GO:0005524">
    <property type="term" value="F:ATP binding"/>
    <property type="evidence" value="ECO:0007669"/>
    <property type="project" value="UniProtKB-KW"/>
</dbReference>
<dbReference type="GO" id="GO:0004637">
    <property type="term" value="F:phosphoribosylamine-glycine ligase activity"/>
    <property type="evidence" value="ECO:0007669"/>
    <property type="project" value="TreeGrafter"/>
</dbReference>
<dbReference type="GO" id="GO:0004641">
    <property type="term" value="F:phosphoribosylformylglycinamidine cyclo-ligase activity"/>
    <property type="evidence" value="ECO:0007669"/>
    <property type="project" value="UniProtKB-UniRule"/>
</dbReference>
<dbReference type="GO" id="GO:0006189">
    <property type="term" value="P:'de novo' IMP biosynthetic process"/>
    <property type="evidence" value="ECO:0007669"/>
    <property type="project" value="UniProtKB-UniRule"/>
</dbReference>
<dbReference type="GO" id="GO:0046084">
    <property type="term" value="P:adenine biosynthetic process"/>
    <property type="evidence" value="ECO:0007669"/>
    <property type="project" value="TreeGrafter"/>
</dbReference>
<dbReference type="CDD" id="cd02196">
    <property type="entry name" value="PurM"/>
    <property type="match status" value="1"/>
</dbReference>
<dbReference type="FunFam" id="3.30.1330.10:FF:000001">
    <property type="entry name" value="Phosphoribosylformylglycinamidine cyclo-ligase"/>
    <property type="match status" value="1"/>
</dbReference>
<dbReference type="FunFam" id="3.90.650.10:FF:000011">
    <property type="entry name" value="Phosphoribosylformylglycinamidine cyclo-ligase"/>
    <property type="match status" value="1"/>
</dbReference>
<dbReference type="Gene3D" id="3.90.650.10">
    <property type="entry name" value="PurM-like C-terminal domain"/>
    <property type="match status" value="1"/>
</dbReference>
<dbReference type="Gene3D" id="3.30.1330.10">
    <property type="entry name" value="PurM-like, N-terminal domain"/>
    <property type="match status" value="1"/>
</dbReference>
<dbReference type="HAMAP" id="MF_00741">
    <property type="entry name" value="AIRS"/>
    <property type="match status" value="1"/>
</dbReference>
<dbReference type="InterPro" id="IPR010918">
    <property type="entry name" value="PurM-like_C_dom"/>
</dbReference>
<dbReference type="InterPro" id="IPR036676">
    <property type="entry name" value="PurM-like_C_sf"/>
</dbReference>
<dbReference type="InterPro" id="IPR016188">
    <property type="entry name" value="PurM-like_N"/>
</dbReference>
<dbReference type="InterPro" id="IPR036921">
    <property type="entry name" value="PurM-like_N_sf"/>
</dbReference>
<dbReference type="InterPro" id="IPR004733">
    <property type="entry name" value="PurM_cligase"/>
</dbReference>
<dbReference type="NCBIfam" id="TIGR00878">
    <property type="entry name" value="purM"/>
    <property type="match status" value="1"/>
</dbReference>
<dbReference type="PANTHER" id="PTHR10520:SF12">
    <property type="entry name" value="TRIFUNCTIONAL PURINE BIOSYNTHETIC PROTEIN ADENOSINE-3"/>
    <property type="match status" value="1"/>
</dbReference>
<dbReference type="PANTHER" id="PTHR10520">
    <property type="entry name" value="TRIFUNCTIONAL PURINE BIOSYNTHETIC PROTEIN ADENOSINE-3-RELATED"/>
    <property type="match status" value="1"/>
</dbReference>
<dbReference type="Pfam" id="PF00586">
    <property type="entry name" value="AIRS"/>
    <property type="match status" value="1"/>
</dbReference>
<dbReference type="Pfam" id="PF02769">
    <property type="entry name" value="AIRS_C"/>
    <property type="match status" value="1"/>
</dbReference>
<dbReference type="SUPFAM" id="SSF56042">
    <property type="entry name" value="PurM C-terminal domain-like"/>
    <property type="match status" value="1"/>
</dbReference>
<dbReference type="SUPFAM" id="SSF55326">
    <property type="entry name" value="PurM N-terminal domain-like"/>
    <property type="match status" value="1"/>
</dbReference>
<accession>A2C535</accession>
<keyword id="KW-0067">ATP-binding</keyword>
<keyword id="KW-0963">Cytoplasm</keyword>
<keyword id="KW-0436">Ligase</keyword>
<keyword id="KW-0547">Nucleotide-binding</keyword>
<keyword id="KW-0658">Purine biosynthesis</keyword>
<reference key="1">
    <citation type="journal article" date="2007" name="PLoS Genet.">
        <title>Patterns and implications of gene gain and loss in the evolution of Prochlorococcus.</title>
        <authorList>
            <person name="Kettler G.C."/>
            <person name="Martiny A.C."/>
            <person name="Huang K."/>
            <person name="Zucker J."/>
            <person name="Coleman M.L."/>
            <person name="Rodrigue S."/>
            <person name="Chen F."/>
            <person name="Lapidus A."/>
            <person name="Ferriera S."/>
            <person name="Johnson J."/>
            <person name="Steglich C."/>
            <person name="Church G.M."/>
            <person name="Richardson P."/>
            <person name="Chisholm S.W."/>
        </authorList>
    </citation>
    <scope>NUCLEOTIDE SEQUENCE [LARGE SCALE GENOMIC DNA]</scope>
    <source>
        <strain>NATL1A</strain>
    </source>
</reference>
<sequence>MDYKTAGVDVTAGRAFVERIKSCVEKTHKSEVIGGLGGFGGCIRIPKGFESPVLVSGTDGVGTKLELAQQYGCHFGVGIDLVAMCVNDVITNGARPLFFLDYIASGTLTPDALAEVIEGIAAGCCQSDCSLLGGETAEMPGFYPSGRYDLAGFCVGIVENHHLIDGTKINCGDQIIGIKSNGVHSNGFSLVRKVLSMANVDENTLYGKDKRNLIQSLLEPTAIYVQLVEKLLRENLPIHGMTHITGGGLPENLPRIFPSGLLPHIDITTWEITEIFNWLQNAGDIPEIDLWNTFNMGIGFCLIVPKNEVNSALEICMKNDFEAWNIGQVVESQNNSKHSGILGIPS</sequence>
<name>PUR5_PROM1</name>
<protein>
    <recommendedName>
        <fullName evidence="1">Phosphoribosylformylglycinamidine cyclo-ligase</fullName>
        <ecNumber evidence="1">6.3.3.1</ecNumber>
    </recommendedName>
    <alternativeName>
        <fullName evidence="1">AIR synthase</fullName>
    </alternativeName>
    <alternativeName>
        <fullName evidence="1">AIRS</fullName>
    </alternativeName>
    <alternativeName>
        <fullName evidence="1">Phosphoribosyl-aminoimidazole synthetase</fullName>
    </alternativeName>
</protein>
<gene>
    <name evidence="1" type="primary">purM</name>
    <name type="ordered locus">NATL1_20391</name>
</gene>
<feature type="chain" id="PRO_1000046454" description="Phosphoribosylformylglycinamidine cyclo-ligase">
    <location>
        <begin position="1"/>
        <end position="346"/>
    </location>
</feature>
<comment type="catalytic activity">
    <reaction evidence="1">
        <text>2-formamido-N(1)-(5-O-phospho-beta-D-ribosyl)acetamidine + ATP = 5-amino-1-(5-phospho-beta-D-ribosyl)imidazole + ADP + phosphate + H(+)</text>
        <dbReference type="Rhea" id="RHEA:23032"/>
        <dbReference type="ChEBI" id="CHEBI:15378"/>
        <dbReference type="ChEBI" id="CHEBI:30616"/>
        <dbReference type="ChEBI" id="CHEBI:43474"/>
        <dbReference type="ChEBI" id="CHEBI:137981"/>
        <dbReference type="ChEBI" id="CHEBI:147287"/>
        <dbReference type="ChEBI" id="CHEBI:456216"/>
        <dbReference type="EC" id="6.3.3.1"/>
    </reaction>
</comment>
<comment type="pathway">
    <text evidence="1">Purine metabolism; IMP biosynthesis via de novo pathway; 5-amino-1-(5-phospho-D-ribosyl)imidazole from N(2)-formyl-N(1)-(5-phospho-D-ribosyl)glycinamide: step 2/2.</text>
</comment>
<comment type="subcellular location">
    <subcellularLocation>
        <location evidence="1">Cytoplasm</location>
    </subcellularLocation>
</comment>
<comment type="similarity">
    <text evidence="1">Belongs to the AIR synthase family.</text>
</comment>
<proteinExistence type="inferred from homology"/>